<dbReference type="EMBL" id="CP000352">
    <property type="protein sequence ID" value="ABF08572.1"/>
    <property type="molecule type" value="Genomic_DNA"/>
</dbReference>
<dbReference type="RefSeq" id="WP_011516421.1">
    <property type="nucleotide sequence ID" value="NC_007973.1"/>
</dbReference>
<dbReference type="SMR" id="Q1LMQ4"/>
<dbReference type="STRING" id="266264.Rmet_1691"/>
<dbReference type="KEGG" id="rme:Rmet_1691"/>
<dbReference type="eggNOG" id="ENOG5033FKD">
    <property type="taxonomic scope" value="Bacteria"/>
</dbReference>
<dbReference type="HOGENOM" id="CLU_122824_0_0_4"/>
<dbReference type="Proteomes" id="UP000002429">
    <property type="component" value="Chromosome"/>
</dbReference>
<dbReference type="GO" id="GO:0005737">
    <property type="term" value="C:cytoplasm"/>
    <property type="evidence" value="ECO:0007669"/>
    <property type="project" value="UniProtKB-SubCell"/>
</dbReference>
<dbReference type="GO" id="GO:0003677">
    <property type="term" value="F:DNA binding"/>
    <property type="evidence" value="ECO:0007669"/>
    <property type="project" value="UniProtKB-UniRule"/>
</dbReference>
<dbReference type="GO" id="GO:0008270">
    <property type="term" value="F:zinc ion binding"/>
    <property type="evidence" value="ECO:0007669"/>
    <property type="project" value="UniProtKB-UniRule"/>
</dbReference>
<dbReference type="GO" id="GO:0044781">
    <property type="term" value="P:bacterial-type flagellum organization"/>
    <property type="evidence" value="ECO:0007669"/>
    <property type="project" value="UniProtKB-KW"/>
</dbReference>
<dbReference type="GO" id="GO:0045893">
    <property type="term" value="P:positive regulation of DNA-templated transcription"/>
    <property type="evidence" value="ECO:0007669"/>
    <property type="project" value="InterPro"/>
</dbReference>
<dbReference type="GO" id="GO:1902208">
    <property type="term" value="P:regulation of bacterial-type flagellum assembly"/>
    <property type="evidence" value="ECO:0007669"/>
    <property type="project" value="UniProtKB-UniRule"/>
</dbReference>
<dbReference type="HAMAP" id="MF_01891">
    <property type="entry name" value="FhlC"/>
    <property type="match status" value="1"/>
</dbReference>
<dbReference type="InterPro" id="IPR007944">
    <property type="entry name" value="FlhC"/>
</dbReference>
<dbReference type="NCBIfam" id="NF009365">
    <property type="entry name" value="PRK12722.1"/>
    <property type="match status" value="1"/>
</dbReference>
<dbReference type="Pfam" id="PF05280">
    <property type="entry name" value="FlhC"/>
    <property type="match status" value="1"/>
</dbReference>
<dbReference type="PIRSF" id="PIRSF003159">
    <property type="entry name" value="FlhC"/>
    <property type="match status" value="1"/>
</dbReference>
<dbReference type="SUPFAM" id="SSF160930">
    <property type="entry name" value="FlhC-like"/>
    <property type="match status" value="1"/>
</dbReference>
<organism>
    <name type="scientific">Cupriavidus metallidurans (strain ATCC 43123 / DSM 2839 / NBRC 102507 / CH34)</name>
    <name type="common">Ralstonia metallidurans</name>
    <dbReference type="NCBI Taxonomy" id="266264"/>
    <lineage>
        <taxon>Bacteria</taxon>
        <taxon>Pseudomonadati</taxon>
        <taxon>Pseudomonadota</taxon>
        <taxon>Betaproteobacteria</taxon>
        <taxon>Burkholderiales</taxon>
        <taxon>Burkholderiaceae</taxon>
        <taxon>Cupriavidus</taxon>
    </lineage>
</organism>
<feature type="chain" id="PRO_0000406764" description="Flagellar transcriptional regulator FlhC">
    <location>
        <begin position="1"/>
        <end position="213"/>
    </location>
</feature>
<feature type="binding site" evidence="1">
    <location>
        <position position="138"/>
    </location>
    <ligand>
        <name>Zn(2+)</name>
        <dbReference type="ChEBI" id="CHEBI:29105"/>
    </ligand>
</feature>
<feature type="binding site" evidence="1">
    <location>
        <position position="141"/>
    </location>
    <ligand>
        <name>Zn(2+)</name>
        <dbReference type="ChEBI" id="CHEBI:29105"/>
    </ligand>
</feature>
<feature type="binding site" evidence="1">
    <location>
        <position position="158"/>
    </location>
    <ligand>
        <name>Zn(2+)</name>
        <dbReference type="ChEBI" id="CHEBI:29105"/>
    </ligand>
</feature>
<feature type="binding site" evidence="1">
    <location>
        <position position="161"/>
    </location>
    <ligand>
        <name>Zn(2+)</name>
        <dbReference type="ChEBI" id="CHEBI:29105"/>
    </ligand>
</feature>
<accession>Q1LMQ4</accession>
<proteinExistence type="inferred from homology"/>
<protein>
    <recommendedName>
        <fullName evidence="1">Flagellar transcriptional regulator FlhC</fullName>
    </recommendedName>
</protein>
<evidence type="ECO:0000255" key="1">
    <source>
        <dbReference type="HAMAP-Rule" id="MF_01891"/>
    </source>
</evidence>
<name>FLHC_CUPMC</name>
<keyword id="KW-0010">Activator</keyword>
<keyword id="KW-1005">Bacterial flagellum biogenesis</keyword>
<keyword id="KW-0963">Cytoplasm</keyword>
<keyword id="KW-0238">DNA-binding</keyword>
<keyword id="KW-0479">Metal-binding</keyword>
<keyword id="KW-1185">Reference proteome</keyword>
<keyword id="KW-0804">Transcription</keyword>
<keyword id="KW-0805">Transcription regulation</keyword>
<keyword id="KW-0862">Zinc</keyword>
<reference key="1">
    <citation type="journal article" date="2010" name="PLoS ONE">
        <title>The complete genome sequence of Cupriavidus metallidurans strain CH34, a master survivalist in harsh and anthropogenic environments.</title>
        <authorList>
            <person name="Janssen P.J."/>
            <person name="Van Houdt R."/>
            <person name="Moors H."/>
            <person name="Monsieurs P."/>
            <person name="Morin N."/>
            <person name="Michaux A."/>
            <person name="Benotmane M.A."/>
            <person name="Leys N."/>
            <person name="Vallaeys T."/>
            <person name="Lapidus A."/>
            <person name="Monchy S."/>
            <person name="Medigue C."/>
            <person name="Taghavi S."/>
            <person name="McCorkle S."/>
            <person name="Dunn J."/>
            <person name="van der Lelie D."/>
            <person name="Mergeay M."/>
        </authorList>
    </citation>
    <scope>NUCLEOTIDE SEQUENCE [LARGE SCALE GENOMIC DNA]</scope>
    <source>
        <strain>ATCC 43123 / DSM 2839 / NBRC 102507 / CH34</strain>
    </source>
</reference>
<gene>
    <name evidence="1" type="primary">flhC</name>
    <name type="ordered locus">Rmet_1691</name>
</gene>
<comment type="function">
    <text evidence="1">Functions in complex with FlhD as a master transcriptional regulator that regulates transcription of several flagellar and non-flagellar operons by binding to their promoter region. Activates expression of class 2 flagellar genes, including fliA, which is a flagellum-specific sigma factor that turns on the class 3 genes. Also regulates genes whose products function in a variety of physiological pathways.</text>
</comment>
<comment type="cofactor">
    <cofactor evidence="1">
        <name>Zn(2+)</name>
        <dbReference type="ChEBI" id="CHEBI:29105"/>
    </cofactor>
    <text evidence="1">Binds 1 zinc ion per subunit.</text>
</comment>
<comment type="subunit">
    <text evidence="1">Heterohexamer composed of two FlhC and four FlhD subunits. Each FlhC binds a FlhD dimer, forming a heterotrimer, and a hexamer assembles by dimerization of two heterotrimers.</text>
</comment>
<comment type="subcellular location">
    <subcellularLocation>
        <location evidence="1">Cytoplasm</location>
    </subcellularLocation>
</comment>
<comment type="similarity">
    <text evidence="1">Belongs to the FlhC family.</text>
</comment>
<sequence length="213" mass="24001">MTTRKSVLREVEEFRLAVELVELGARLQVLESEVAISRDRLTRLYKELRGVSPPKGQLPSSPEWFLTWRPNVHASLFLSAYRFLMAQGKQSRIRCIVSAYRLYVEHISLIGEDLTLSFTRAWTMLRFLDSGTLVSSTCKCCGGSFVRHKYDLQTNFVCGLCAPPPRAAKGKKLATSAEPFVVPEDLQQTISIEPAAMNRPKDAPLRRMGSLKP</sequence>